<protein>
    <recommendedName>
        <fullName evidence="1">Arginine--tRNA ligase</fullName>
        <ecNumber evidence="1">6.1.1.19</ecNumber>
    </recommendedName>
    <alternativeName>
        <fullName evidence="1">Arginyl-tRNA synthetase</fullName>
        <shortName evidence="1">ArgRS</shortName>
    </alternativeName>
</protein>
<reference key="1">
    <citation type="journal article" date="2008" name="BMC Genomics">
        <title>The missing link: Bordetella petrii is endowed with both the metabolic versatility of environmental bacteria and virulence traits of pathogenic Bordetellae.</title>
        <authorList>
            <person name="Gross R."/>
            <person name="Guzman C.A."/>
            <person name="Sebaihia M."/>
            <person name="Martin dos Santos V.A.P."/>
            <person name="Pieper D.H."/>
            <person name="Koebnik R."/>
            <person name="Lechner M."/>
            <person name="Bartels D."/>
            <person name="Buhrmester J."/>
            <person name="Choudhuri J.V."/>
            <person name="Ebensen T."/>
            <person name="Gaigalat L."/>
            <person name="Herrmann S."/>
            <person name="Khachane A.N."/>
            <person name="Larisch C."/>
            <person name="Link S."/>
            <person name="Linke B."/>
            <person name="Meyer F."/>
            <person name="Mormann S."/>
            <person name="Nakunst D."/>
            <person name="Rueckert C."/>
            <person name="Schneiker-Bekel S."/>
            <person name="Schulze K."/>
            <person name="Voerholter F.-J."/>
            <person name="Yevsa T."/>
            <person name="Engle J.T."/>
            <person name="Goldman W.E."/>
            <person name="Puehler A."/>
            <person name="Goebel U.B."/>
            <person name="Goesmann A."/>
            <person name="Bloecker H."/>
            <person name="Kaiser O."/>
            <person name="Martinez-Arias R."/>
        </authorList>
    </citation>
    <scope>NUCLEOTIDE SEQUENCE [LARGE SCALE GENOMIC DNA]</scope>
    <source>
        <strain>ATCC BAA-461 / DSM 12804 / CCUG 43448</strain>
    </source>
</reference>
<dbReference type="EC" id="6.1.1.19" evidence="1"/>
<dbReference type="EMBL" id="AM902716">
    <property type="protein sequence ID" value="CAP40400.1"/>
    <property type="molecule type" value="Genomic_DNA"/>
</dbReference>
<dbReference type="SMR" id="A9HVX4"/>
<dbReference type="STRING" id="94624.Bpet0069"/>
<dbReference type="KEGG" id="bpt:Bpet0069"/>
<dbReference type="eggNOG" id="COG0018">
    <property type="taxonomic scope" value="Bacteria"/>
</dbReference>
<dbReference type="Proteomes" id="UP000001225">
    <property type="component" value="Chromosome"/>
</dbReference>
<dbReference type="GO" id="GO:0005737">
    <property type="term" value="C:cytoplasm"/>
    <property type="evidence" value="ECO:0007669"/>
    <property type="project" value="UniProtKB-SubCell"/>
</dbReference>
<dbReference type="GO" id="GO:0004814">
    <property type="term" value="F:arginine-tRNA ligase activity"/>
    <property type="evidence" value="ECO:0007669"/>
    <property type="project" value="UniProtKB-UniRule"/>
</dbReference>
<dbReference type="GO" id="GO:0005524">
    <property type="term" value="F:ATP binding"/>
    <property type="evidence" value="ECO:0007669"/>
    <property type="project" value="UniProtKB-UniRule"/>
</dbReference>
<dbReference type="GO" id="GO:0006420">
    <property type="term" value="P:arginyl-tRNA aminoacylation"/>
    <property type="evidence" value="ECO:0007669"/>
    <property type="project" value="UniProtKB-UniRule"/>
</dbReference>
<dbReference type="CDD" id="cd07956">
    <property type="entry name" value="Anticodon_Ia_Arg"/>
    <property type="match status" value="1"/>
</dbReference>
<dbReference type="CDD" id="cd00671">
    <property type="entry name" value="ArgRS_core"/>
    <property type="match status" value="1"/>
</dbReference>
<dbReference type="FunFam" id="1.10.730.10:FF:000008">
    <property type="entry name" value="Arginine--tRNA ligase"/>
    <property type="match status" value="1"/>
</dbReference>
<dbReference type="FunFam" id="3.40.50.620:FF:000062">
    <property type="entry name" value="Arginine--tRNA ligase"/>
    <property type="match status" value="1"/>
</dbReference>
<dbReference type="Gene3D" id="3.30.1360.70">
    <property type="entry name" value="Arginyl tRNA synthetase N-terminal domain"/>
    <property type="match status" value="1"/>
</dbReference>
<dbReference type="Gene3D" id="3.40.50.620">
    <property type="entry name" value="HUPs"/>
    <property type="match status" value="1"/>
</dbReference>
<dbReference type="Gene3D" id="1.10.730.10">
    <property type="entry name" value="Isoleucyl-tRNA Synthetase, Domain 1"/>
    <property type="match status" value="1"/>
</dbReference>
<dbReference type="HAMAP" id="MF_00123">
    <property type="entry name" value="Arg_tRNA_synth"/>
    <property type="match status" value="1"/>
</dbReference>
<dbReference type="InterPro" id="IPR001412">
    <property type="entry name" value="aa-tRNA-synth_I_CS"/>
</dbReference>
<dbReference type="InterPro" id="IPR001278">
    <property type="entry name" value="Arg-tRNA-ligase"/>
</dbReference>
<dbReference type="InterPro" id="IPR005148">
    <property type="entry name" value="Arg-tRNA-synth_N"/>
</dbReference>
<dbReference type="InterPro" id="IPR036695">
    <property type="entry name" value="Arg-tRNA-synth_N_sf"/>
</dbReference>
<dbReference type="InterPro" id="IPR035684">
    <property type="entry name" value="ArgRS_core"/>
</dbReference>
<dbReference type="InterPro" id="IPR008909">
    <property type="entry name" value="DALR_anticod-bd"/>
</dbReference>
<dbReference type="InterPro" id="IPR014729">
    <property type="entry name" value="Rossmann-like_a/b/a_fold"/>
</dbReference>
<dbReference type="InterPro" id="IPR009080">
    <property type="entry name" value="tRNAsynth_Ia_anticodon-bd"/>
</dbReference>
<dbReference type="NCBIfam" id="TIGR00456">
    <property type="entry name" value="argS"/>
    <property type="match status" value="1"/>
</dbReference>
<dbReference type="PANTHER" id="PTHR11956:SF5">
    <property type="entry name" value="ARGININE--TRNA LIGASE, CYTOPLASMIC"/>
    <property type="match status" value="1"/>
</dbReference>
<dbReference type="PANTHER" id="PTHR11956">
    <property type="entry name" value="ARGINYL-TRNA SYNTHETASE"/>
    <property type="match status" value="1"/>
</dbReference>
<dbReference type="Pfam" id="PF03485">
    <property type="entry name" value="Arg_tRNA_synt_N"/>
    <property type="match status" value="1"/>
</dbReference>
<dbReference type="Pfam" id="PF05746">
    <property type="entry name" value="DALR_1"/>
    <property type="match status" value="1"/>
</dbReference>
<dbReference type="Pfam" id="PF00750">
    <property type="entry name" value="tRNA-synt_1d"/>
    <property type="match status" value="1"/>
</dbReference>
<dbReference type="PRINTS" id="PR01038">
    <property type="entry name" value="TRNASYNTHARG"/>
</dbReference>
<dbReference type="SMART" id="SM01016">
    <property type="entry name" value="Arg_tRNA_synt_N"/>
    <property type="match status" value="1"/>
</dbReference>
<dbReference type="SMART" id="SM00836">
    <property type="entry name" value="DALR_1"/>
    <property type="match status" value="1"/>
</dbReference>
<dbReference type="SUPFAM" id="SSF47323">
    <property type="entry name" value="Anticodon-binding domain of a subclass of class I aminoacyl-tRNA synthetases"/>
    <property type="match status" value="1"/>
</dbReference>
<dbReference type="SUPFAM" id="SSF55190">
    <property type="entry name" value="Arginyl-tRNA synthetase (ArgRS), N-terminal 'additional' domain"/>
    <property type="match status" value="1"/>
</dbReference>
<dbReference type="SUPFAM" id="SSF52374">
    <property type="entry name" value="Nucleotidylyl transferase"/>
    <property type="match status" value="1"/>
</dbReference>
<dbReference type="PROSITE" id="PS00178">
    <property type="entry name" value="AA_TRNA_LIGASE_I"/>
    <property type="match status" value="1"/>
</dbReference>
<comment type="catalytic activity">
    <reaction evidence="1">
        <text>tRNA(Arg) + L-arginine + ATP = L-arginyl-tRNA(Arg) + AMP + diphosphate</text>
        <dbReference type="Rhea" id="RHEA:20301"/>
        <dbReference type="Rhea" id="RHEA-COMP:9658"/>
        <dbReference type="Rhea" id="RHEA-COMP:9673"/>
        <dbReference type="ChEBI" id="CHEBI:30616"/>
        <dbReference type="ChEBI" id="CHEBI:32682"/>
        <dbReference type="ChEBI" id="CHEBI:33019"/>
        <dbReference type="ChEBI" id="CHEBI:78442"/>
        <dbReference type="ChEBI" id="CHEBI:78513"/>
        <dbReference type="ChEBI" id="CHEBI:456215"/>
        <dbReference type="EC" id="6.1.1.19"/>
    </reaction>
</comment>
<comment type="subunit">
    <text evidence="1">Monomer.</text>
</comment>
<comment type="subcellular location">
    <subcellularLocation>
        <location evidence="1">Cytoplasm</location>
    </subcellularLocation>
</comment>
<comment type="similarity">
    <text evidence="1">Belongs to the class-I aminoacyl-tRNA synthetase family.</text>
</comment>
<keyword id="KW-0030">Aminoacyl-tRNA synthetase</keyword>
<keyword id="KW-0067">ATP-binding</keyword>
<keyword id="KW-0963">Cytoplasm</keyword>
<keyword id="KW-0436">Ligase</keyword>
<keyword id="KW-0547">Nucleotide-binding</keyword>
<keyword id="KW-0648">Protein biosynthesis</keyword>
<gene>
    <name evidence="1" type="primary">argS</name>
    <name type="ordered locus">Bpet0069</name>
</gene>
<evidence type="ECO:0000255" key="1">
    <source>
        <dbReference type="HAMAP-Rule" id="MF_00123"/>
    </source>
</evidence>
<sequence length="561" mass="61445">MLPEQQQQLISLIQAAVASVLPDAQAQVLLERPKVAAHGDVATNIAMQLAKPARRNPRELAQGIVDALMAETAARALVENAEIAGPGFINFRITAAARQAVIQAVAEQGEAYGHAPATGEKVLVEFVSANPTGPLHVGHARQAALGDAICRLYAATGRDVTREFYYNDAGNQIQNLAVSVQARARGIAPDSPDYPADGYKGDYIVDIAQDFIARKTLQAADGAAVTASGDVDNLDDIRVFAVAYLRREQDLDLQAFGLAFDNYYLESSLYTSGRVEQTVQALVAKGHTYEQDGALWLRTTELGTGDDKDRVMRKSEGGYTYFVPDVAYHKAKWERGFRHAVNIQGSDHHGTVARVRAGLQALEEGIPKDYPAYVLHKMVKVMRGGEEVKISKRAGSYVTLRDLIDWVGRDAVRYFLIQRRADTEFVFDIDLALSKSDENPVYYIQYAHARICSMIANAGADDARIAQADTALLTAPTEFALMQRLASFPQIVAQAAQELAPHHIAFWLRDCASDFHAWYNAERVLVDDEPLKLARLRLAATTRQVLANGLALLGVSAPQRM</sequence>
<accession>A9HVX4</accession>
<feature type="chain" id="PRO_1000095337" description="Arginine--tRNA ligase">
    <location>
        <begin position="1"/>
        <end position="561"/>
    </location>
</feature>
<feature type="short sequence motif" description="'HIGH' region">
    <location>
        <begin position="129"/>
        <end position="139"/>
    </location>
</feature>
<organism>
    <name type="scientific">Bordetella petrii (strain ATCC BAA-461 / DSM 12804 / CCUG 43448)</name>
    <dbReference type="NCBI Taxonomy" id="340100"/>
    <lineage>
        <taxon>Bacteria</taxon>
        <taxon>Pseudomonadati</taxon>
        <taxon>Pseudomonadota</taxon>
        <taxon>Betaproteobacteria</taxon>
        <taxon>Burkholderiales</taxon>
        <taxon>Alcaligenaceae</taxon>
        <taxon>Bordetella</taxon>
    </lineage>
</organism>
<name>SYR_BORPD</name>
<proteinExistence type="inferred from homology"/>